<protein>
    <recommendedName>
        <fullName evidence="1">Signal recognition particle receptor FtsY</fullName>
        <shortName evidence="1">SRP receptor</shortName>
        <ecNumber evidence="1">3.6.5.4</ecNumber>
    </recommendedName>
</protein>
<proteinExistence type="evidence at protein level"/>
<name>FTSY_BACSU</name>
<accession>P51835</accession>
<accession>O31736</accession>
<feature type="chain" id="PRO_0000101127" description="Signal recognition particle receptor FtsY">
    <location>
        <begin position="1"/>
        <end position="329"/>
    </location>
</feature>
<feature type="binding site" evidence="1">
    <location>
        <begin position="127"/>
        <end position="134"/>
    </location>
    <ligand>
        <name>GTP</name>
        <dbReference type="ChEBI" id="CHEBI:37565"/>
    </ligand>
</feature>
<feature type="binding site" evidence="1">
    <location>
        <begin position="209"/>
        <end position="213"/>
    </location>
    <ligand>
        <name>GTP</name>
        <dbReference type="ChEBI" id="CHEBI:37565"/>
    </ligand>
</feature>
<feature type="binding site" evidence="1">
    <location>
        <begin position="273"/>
        <end position="276"/>
    </location>
    <ligand>
        <name>GTP</name>
        <dbReference type="ChEBI" id="CHEBI:37565"/>
    </ligand>
</feature>
<feature type="sequence conflict" description="In Ref. 1; BAA08616/BAA10978." evidence="3" ref="1">
    <original>A</original>
    <variation>T</variation>
    <location>
        <position position="238"/>
    </location>
</feature>
<evidence type="ECO:0000255" key="1">
    <source>
        <dbReference type="HAMAP-Rule" id="MF_00920"/>
    </source>
</evidence>
<evidence type="ECO:0000269" key="2">
    <source>
    </source>
</evidence>
<evidence type="ECO:0000305" key="3"/>
<sequence length="329" mass="36343">MSFFKKLKEKITKQTDSVSEKFKDGLEKTRNSFQNKVNDLVSRYRKVDEDFFEELEEVLISADVGFTTVMELIDELKKEVKRRNIQDPKEVQSVISEKLVEIYNSGDEQISELNIQDGRLNVILLVGVNGVGKTTTIGKLAHKMKQEGKSVVLAAGDTFRAGAIEQLEVWGERTGVPVIKQTAGSDPAAVIYDAVHAAKARNADVLICDTAGRLQNKVNLMKELEKVKRVIEREVPEAPHEVLLALDATTGQNAMAQAKEFSKATNVTGIALTKLDGTAKGGIVLAIRNELHIPVKLVGLGEKVDDLQEFDPESYVYGLFSDLVEKADD</sequence>
<gene>
    <name evidence="1" type="primary">ftsY</name>
    <name type="synonym">srb</name>
    <name type="ordered locus">BSU15950</name>
</gene>
<organism>
    <name type="scientific">Bacillus subtilis (strain 168)</name>
    <dbReference type="NCBI Taxonomy" id="224308"/>
    <lineage>
        <taxon>Bacteria</taxon>
        <taxon>Bacillati</taxon>
        <taxon>Bacillota</taxon>
        <taxon>Bacilli</taxon>
        <taxon>Bacillales</taxon>
        <taxon>Bacillaceae</taxon>
        <taxon>Bacillus</taxon>
    </lineage>
</organism>
<comment type="function">
    <text evidence="1">Involved in targeting and insertion of nascent membrane proteins into the cytoplasmic membrane. Acts as a receptor for the complex formed by the signal recognition particle (SRP) and the ribosome-nascent chain (RNC).</text>
</comment>
<comment type="catalytic activity">
    <reaction evidence="1">
        <text>GTP + H2O = GDP + phosphate + H(+)</text>
        <dbReference type="Rhea" id="RHEA:19669"/>
        <dbReference type="ChEBI" id="CHEBI:15377"/>
        <dbReference type="ChEBI" id="CHEBI:15378"/>
        <dbReference type="ChEBI" id="CHEBI:37565"/>
        <dbReference type="ChEBI" id="CHEBI:43474"/>
        <dbReference type="ChEBI" id="CHEBI:58189"/>
        <dbReference type="EC" id="3.6.5.4"/>
    </reaction>
</comment>
<comment type="subunit">
    <text evidence="1">Part of the signal recognition particle protein translocation system, which is composed of SRP and FtsY.</text>
</comment>
<comment type="subcellular location">
    <subcellularLocation>
        <location evidence="1 2">Cell membrane</location>
        <topology evidence="1 2">Peripheral membrane protein</topology>
        <orientation evidence="1 2">Cytoplasmic side</orientation>
    </subcellularLocation>
    <subcellularLocation>
        <location evidence="1 2">Cytoplasm</location>
    </subcellularLocation>
    <text>Transiently localizes to early sporulation septa during sporulation.</text>
</comment>
<comment type="similarity">
    <text evidence="1">Belongs to the GTP-binding SRP family. FtsY subfamily.</text>
</comment>
<keyword id="KW-1003">Cell membrane</keyword>
<keyword id="KW-0963">Cytoplasm</keyword>
<keyword id="KW-0342">GTP-binding</keyword>
<keyword id="KW-0378">Hydrolase</keyword>
<keyword id="KW-0472">Membrane</keyword>
<keyword id="KW-0547">Nucleotide-binding</keyword>
<keyword id="KW-0675">Receptor</keyword>
<keyword id="KW-1185">Reference proteome</keyword>
<reference key="1">
    <citation type="journal article" date="1995" name="DNA Res.">
        <title>srb: a Bacillus subtilis gene encoding a homologue of the alpha-subunit of the mammalian signal recognition particle receptor.</title>
        <authorList>
            <person name="Oguro A."/>
            <person name="Kakeshita H."/>
            <person name="Honda K."/>
            <person name="Takamatsu H."/>
            <person name="Nakamura K."/>
            <person name="Yamane K."/>
        </authorList>
    </citation>
    <scope>NUCLEOTIDE SEQUENCE [GENOMIC DNA]</scope>
    <source>
        <strain>168</strain>
    </source>
</reference>
<reference key="2">
    <citation type="journal article" date="1997" name="Nature">
        <title>The complete genome sequence of the Gram-positive bacterium Bacillus subtilis.</title>
        <authorList>
            <person name="Kunst F."/>
            <person name="Ogasawara N."/>
            <person name="Moszer I."/>
            <person name="Albertini A.M."/>
            <person name="Alloni G."/>
            <person name="Azevedo V."/>
            <person name="Bertero M.G."/>
            <person name="Bessieres P."/>
            <person name="Bolotin A."/>
            <person name="Borchert S."/>
            <person name="Borriss R."/>
            <person name="Boursier L."/>
            <person name="Brans A."/>
            <person name="Braun M."/>
            <person name="Brignell S.C."/>
            <person name="Bron S."/>
            <person name="Brouillet S."/>
            <person name="Bruschi C.V."/>
            <person name="Caldwell B."/>
            <person name="Capuano V."/>
            <person name="Carter N.M."/>
            <person name="Choi S.-K."/>
            <person name="Codani J.-J."/>
            <person name="Connerton I.F."/>
            <person name="Cummings N.J."/>
            <person name="Daniel R.A."/>
            <person name="Denizot F."/>
            <person name="Devine K.M."/>
            <person name="Duesterhoeft A."/>
            <person name="Ehrlich S.D."/>
            <person name="Emmerson P.T."/>
            <person name="Entian K.-D."/>
            <person name="Errington J."/>
            <person name="Fabret C."/>
            <person name="Ferrari E."/>
            <person name="Foulger D."/>
            <person name="Fritz C."/>
            <person name="Fujita M."/>
            <person name="Fujita Y."/>
            <person name="Fuma S."/>
            <person name="Galizzi A."/>
            <person name="Galleron N."/>
            <person name="Ghim S.-Y."/>
            <person name="Glaser P."/>
            <person name="Goffeau A."/>
            <person name="Golightly E.J."/>
            <person name="Grandi G."/>
            <person name="Guiseppi G."/>
            <person name="Guy B.J."/>
            <person name="Haga K."/>
            <person name="Haiech J."/>
            <person name="Harwood C.R."/>
            <person name="Henaut A."/>
            <person name="Hilbert H."/>
            <person name="Holsappel S."/>
            <person name="Hosono S."/>
            <person name="Hullo M.-F."/>
            <person name="Itaya M."/>
            <person name="Jones L.-M."/>
            <person name="Joris B."/>
            <person name="Karamata D."/>
            <person name="Kasahara Y."/>
            <person name="Klaerr-Blanchard M."/>
            <person name="Klein C."/>
            <person name="Kobayashi Y."/>
            <person name="Koetter P."/>
            <person name="Koningstein G."/>
            <person name="Krogh S."/>
            <person name="Kumano M."/>
            <person name="Kurita K."/>
            <person name="Lapidus A."/>
            <person name="Lardinois S."/>
            <person name="Lauber J."/>
            <person name="Lazarevic V."/>
            <person name="Lee S.-M."/>
            <person name="Levine A."/>
            <person name="Liu H."/>
            <person name="Masuda S."/>
            <person name="Mauel C."/>
            <person name="Medigue C."/>
            <person name="Medina N."/>
            <person name="Mellado R.P."/>
            <person name="Mizuno M."/>
            <person name="Moestl D."/>
            <person name="Nakai S."/>
            <person name="Noback M."/>
            <person name="Noone D."/>
            <person name="O'Reilly M."/>
            <person name="Ogawa K."/>
            <person name="Ogiwara A."/>
            <person name="Oudega B."/>
            <person name="Park S.-H."/>
            <person name="Parro V."/>
            <person name="Pohl T.M."/>
            <person name="Portetelle D."/>
            <person name="Porwollik S."/>
            <person name="Prescott A.M."/>
            <person name="Presecan E."/>
            <person name="Pujic P."/>
            <person name="Purnelle B."/>
            <person name="Rapoport G."/>
            <person name="Rey M."/>
            <person name="Reynolds S."/>
            <person name="Rieger M."/>
            <person name="Rivolta C."/>
            <person name="Rocha E."/>
            <person name="Roche B."/>
            <person name="Rose M."/>
            <person name="Sadaie Y."/>
            <person name="Sato T."/>
            <person name="Scanlan E."/>
            <person name="Schleich S."/>
            <person name="Schroeter R."/>
            <person name="Scoffone F."/>
            <person name="Sekiguchi J."/>
            <person name="Sekowska A."/>
            <person name="Seror S.J."/>
            <person name="Serror P."/>
            <person name="Shin B.-S."/>
            <person name="Soldo B."/>
            <person name="Sorokin A."/>
            <person name="Tacconi E."/>
            <person name="Takagi T."/>
            <person name="Takahashi H."/>
            <person name="Takemaru K."/>
            <person name="Takeuchi M."/>
            <person name="Tamakoshi A."/>
            <person name="Tanaka T."/>
            <person name="Terpstra P."/>
            <person name="Tognoni A."/>
            <person name="Tosato V."/>
            <person name="Uchiyama S."/>
            <person name="Vandenbol M."/>
            <person name="Vannier F."/>
            <person name="Vassarotti A."/>
            <person name="Viari A."/>
            <person name="Wambutt R."/>
            <person name="Wedler E."/>
            <person name="Wedler H."/>
            <person name="Weitzenegger T."/>
            <person name="Winters P."/>
            <person name="Wipat A."/>
            <person name="Yamamoto H."/>
            <person name="Yamane K."/>
            <person name="Yasumoto K."/>
            <person name="Yata K."/>
            <person name="Yoshida K."/>
            <person name="Yoshikawa H.-F."/>
            <person name="Zumstein E."/>
            <person name="Yoshikawa H."/>
            <person name="Danchin A."/>
        </authorList>
    </citation>
    <scope>NUCLEOTIDE SEQUENCE [LARGE SCALE GENOMIC DNA]</scope>
    <source>
        <strain>168</strain>
    </source>
</reference>
<reference key="3">
    <citation type="journal article" date="1996" name="Gene">
        <title>The effect of Srb, a homologue of the mammalian SRP receptor alpha-subunit, on Bacillus subtilis growth and protein translocation.</title>
        <authorList>
            <person name="Oguro A."/>
            <person name="Kakeshita H."/>
            <person name="Takamatsu H."/>
            <person name="Nakamura K."/>
            <person name="Yamane K."/>
        </authorList>
    </citation>
    <scope>CHARACTERIZATION</scope>
</reference>
<reference key="4">
    <citation type="journal article" date="2005" name="J. Bacteriol.">
        <title>Localization of translocation complex components in Bacillus subtilis: enrichment of the signal recognition particle receptor at early sporulation septa.</title>
        <authorList>
            <person name="Rubio A."/>
            <person name="Jiang X."/>
            <person name="Pogliano K."/>
        </authorList>
    </citation>
    <scope>SUBCELLULAR LOCATION</scope>
    <source>
        <strain>168 / PY79</strain>
    </source>
</reference>
<dbReference type="EC" id="3.6.5.4" evidence="1"/>
<dbReference type="EMBL" id="D49781">
    <property type="protein sequence ID" value="BAA08616.1"/>
    <property type="molecule type" value="Genomic_DNA"/>
</dbReference>
<dbReference type="EMBL" id="D64116">
    <property type="protein sequence ID" value="BAA10978.1"/>
    <property type="molecule type" value="Genomic_DNA"/>
</dbReference>
<dbReference type="EMBL" id="AL009126">
    <property type="protein sequence ID" value="CAB13468.1"/>
    <property type="molecule type" value="Genomic_DNA"/>
</dbReference>
<dbReference type="PIR" id="JC4093">
    <property type="entry name" value="JC4093"/>
</dbReference>
<dbReference type="RefSeq" id="NP_389477.1">
    <property type="nucleotide sequence ID" value="NC_000964.3"/>
</dbReference>
<dbReference type="RefSeq" id="WP_003232026.1">
    <property type="nucleotide sequence ID" value="NZ_OZ025638.1"/>
</dbReference>
<dbReference type="SMR" id="P51835"/>
<dbReference type="FunCoup" id="P51835">
    <property type="interactions" value="602"/>
</dbReference>
<dbReference type="STRING" id="224308.BSU15950"/>
<dbReference type="jPOST" id="P51835"/>
<dbReference type="PaxDb" id="224308-BSU15950"/>
<dbReference type="EnsemblBacteria" id="CAB13468">
    <property type="protein sequence ID" value="CAB13468"/>
    <property type="gene ID" value="BSU_15950"/>
</dbReference>
<dbReference type="GeneID" id="936921"/>
<dbReference type="KEGG" id="bsu:BSU15950"/>
<dbReference type="PATRIC" id="fig|224308.179.peg.1735"/>
<dbReference type="eggNOG" id="COG0552">
    <property type="taxonomic scope" value="Bacteria"/>
</dbReference>
<dbReference type="InParanoid" id="P51835"/>
<dbReference type="OrthoDB" id="9804720at2"/>
<dbReference type="PhylomeDB" id="P51835"/>
<dbReference type="BioCyc" id="BSUB:BSU15950-MONOMER"/>
<dbReference type="Proteomes" id="UP000001570">
    <property type="component" value="Chromosome"/>
</dbReference>
<dbReference type="GO" id="GO:0005737">
    <property type="term" value="C:cytoplasm"/>
    <property type="evidence" value="ECO:0007669"/>
    <property type="project" value="UniProtKB-SubCell"/>
</dbReference>
<dbReference type="GO" id="GO:0005886">
    <property type="term" value="C:plasma membrane"/>
    <property type="evidence" value="ECO:0000318"/>
    <property type="project" value="GO_Central"/>
</dbReference>
<dbReference type="GO" id="GO:0016887">
    <property type="term" value="F:ATP hydrolysis activity"/>
    <property type="evidence" value="ECO:0007669"/>
    <property type="project" value="InterPro"/>
</dbReference>
<dbReference type="GO" id="GO:0005525">
    <property type="term" value="F:GTP binding"/>
    <property type="evidence" value="ECO:0007669"/>
    <property type="project" value="UniProtKB-UniRule"/>
</dbReference>
<dbReference type="GO" id="GO:0003924">
    <property type="term" value="F:GTPase activity"/>
    <property type="evidence" value="ECO:0000318"/>
    <property type="project" value="GO_Central"/>
</dbReference>
<dbReference type="GO" id="GO:0005047">
    <property type="term" value="F:signal recognition particle binding"/>
    <property type="evidence" value="ECO:0000318"/>
    <property type="project" value="GO_Central"/>
</dbReference>
<dbReference type="GO" id="GO:0006605">
    <property type="term" value="P:protein targeting"/>
    <property type="evidence" value="ECO:0000318"/>
    <property type="project" value="GO_Central"/>
</dbReference>
<dbReference type="GO" id="GO:0006614">
    <property type="term" value="P:SRP-dependent cotranslational protein targeting to membrane"/>
    <property type="evidence" value="ECO:0007669"/>
    <property type="project" value="InterPro"/>
</dbReference>
<dbReference type="CDD" id="cd17874">
    <property type="entry name" value="FtsY"/>
    <property type="match status" value="1"/>
</dbReference>
<dbReference type="FunFam" id="1.20.120.140:FF:000002">
    <property type="entry name" value="Signal recognition particle receptor FtsY"/>
    <property type="match status" value="1"/>
</dbReference>
<dbReference type="FunFam" id="3.40.50.300:FF:000053">
    <property type="entry name" value="Signal recognition particle receptor FtsY"/>
    <property type="match status" value="1"/>
</dbReference>
<dbReference type="Gene3D" id="3.40.50.300">
    <property type="entry name" value="P-loop containing nucleotide triphosphate hydrolases"/>
    <property type="match status" value="1"/>
</dbReference>
<dbReference type="Gene3D" id="1.20.120.140">
    <property type="entry name" value="Signal recognition particle SRP54, nucleotide-binding domain"/>
    <property type="match status" value="1"/>
</dbReference>
<dbReference type="HAMAP" id="MF_00920">
    <property type="entry name" value="FtsY"/>
    <property type="match status" value="1"/>
</dbReference>
<dbReference type="InterPro" id="IPR003593">
    <property type="entry name" value="AAA+_ATPase"/>
</dbReference>
<dbReference type="InterPro" id="IPR027417">
    <property type="entry name" value="P-loop_NTPase"/>
</dbReference>
<dbReference type="InterPro" id="IPR013822">
    <property type="entry name" value="Signal_recog_particl_SRP54_hlx"/>
</dbReference>
<dbReference type="InterPro" id="IPR004390">
    <property type="entry name" value="SR_rcpt_FtsY"/>
</dbReference>
<dbReference type="InterPro" id="IPR036225">
    <property type="entry name" value="SRP/SRP_N"/>
</dbReference>
<dbReference type="InterPro" id="IPR000897">
    <property type="entry name" value="SRP54_GTPase_dom"/>
</dbReference>
<dbReference type="InterPro" id="IPR042101">
    <property type="entry name" value="SRP54_N_sf"/>
</dbReference>
<dbReference type="NCBIfam" id="TIGR00064">
    <property type="entry name" value="ftsY"/>
    <property type="match status" value="1"/>
</dbReference>
<dbReference type="PANTHER" id="PTHR43134">
    <property type="entry name" value="SIGNAL RECOGNITION PARTICLE RECEPTOR SUBUNIT ALPHA"/>
    <property type="match status" value="1"/>
</dbReference>
<dbReference type="PANTHER" id="PTHR43134:SF1">
    <property type="entry name" value="SIGNAL RECOGNITION PARTICLE RECEPTOR SUBUNIT ALPHA"/>
    <property type="match status" value="1"/>
</dbReference>
<dbReference type="Pfam" id="PF00448">
    <property type="entry name" value="SRP54"/>
    <property type="match status" value="1"/>
</dbReference>
<dbReference type="Pfam" id="PF02881">
    <property type="entry name" value="SRP54_N"/>
    <property type="match status" value="1"/>
</dbReference>
<dbReference type="SMART" id="SM00382">
    <property type="entry name" value="AAA"/>
    <property type="match status" value="1"/>
</dbReference>
<dbReference type="SMART" id="SM00962">
    <property type="entry name" value="SRP54"/>
    <property type="match status" value="1"/>
</dbReference>
<dbReference type="SMART" id="SM00963">
    <property type="entry name" value="SRP54_N"/>
    <property type="match status" value="1"/>
</dbReference>
<dbReference type="SUPFAM" id="SSF47364">
    <property type="entry name" value="Domain of the SRP/SRP receptor G-proteins"/>
    <property type="match status" value="1"/>
</dbReference>
<dbReference type="SUPFAM" id="SSF52540">
    <property type="entry name" value="P-loop containing nucleoside triphosphate hydrolases"/>
    <property type="match status" value="1"/>
</dbReference>
<dbReference type="PROSITE" id="PS00300">
    <property type="entry name" value="SRP54"/>
    <property type="match status" value="1"/>
</dbReference>